<protein>
    <recommendedName>
        <fullName>Probable 26S proteasome regulatory subunit p27</fullName>
    </recommendedName>
    <alternativeName>
        <fullName>Proteasome non-ATPase subunit 2</fullName>
    </alternativeName>
</protein>
<feature type="chain" id="PRO_0000173856" description="Probable 26S proteasome regulatory subunit p27">
    <location>
        <begin position="1"/>
        <end position="220"/>
    </location>
</feature>
<feature type="domain" description="PDZ">
    <location>
        <begin position="119"/>
        <end position="196"/>
    </location>
</feature>
<feature type="helix" evidence="4">
    <location>
        <begin position="2"/>
        <end position="11"/>
    </location>
</feature>
<feature type="helix" evidence="4">
    <location>
        <begin position="17"/>
        <end position="24"/>
    </location>
</feature>
<feature type="turn" evidence="4">
    <location>
        <begin position="25"/>
        <end position="28"/>
    </location>
</feature>
<feature type="helix" evidence="4">
    <location>
        <begin position="31"/>
        <end position="54"/>
    </location>
</feature>
<feature type="helix" evidence="4">
    <location>
        <begin position="73"/>
        <end position="110"/>
    </location>
</feature>
<feature type="strand" evidence="5">
    <location>
        <begin position="135"/>
        <end position="140"/>
    </location>
</feature>
<feature type="helix" evidence="5">
    <location>
        <begin position="145"/>
        <end position="148"/>
    </location>
</feature>
<feature type="strand" evidence="5">
    <location>
        <begin position="156"/>
        <end position="160"/>
    </location>
</feature>
<feature type="turn" evidence="5">
    <location>
        <begin position="165"/>
        <end position="167"/>
    </location>
</feature>
<feature type="turn" evidence="5">
    <location>
        <begin position="169"/>
        <end position="171"/>
    </location>
</feature>
<feature type="helix" evidence="5">
    <location>
        <begin position="172"/>
        <end position="180"/>
    </location>
</feature>
<feature type="turn" evidence="5">
    <location>
        <begin position="181"/>
        <end position="183"/>
    </location>
</feature>
<feature type="strand" evidence="5">
    <location>
        <begin position="186"/>
        <end position="192"/>
    </location>
</feature>
<feature type="strand" evidence="5">
    <location>
        <begin position="195"/>
        <end position="201"/>
    </location>
</feature>
<feature type="strand" evidence="5">
    <location>
        <begin position="207"/>
        <end position="213"/>
    </location>
</feature>
<feature type="strand" evidence="5">
    <location>
        <begin position="215"/>
        <end position="219"/>
    </location>
</feature>
<accession>P40555</accession>
<accession>D6VVS3</accession>
<evidence type="ECO:0000269" key="1">
    <source>
    </source>
</evidence>
<evidence type="ECO:0000269" key="2">
    <source>
    </source>
</evidence>
<evidence type="ECO:0000305" key="3"/>
<evidence type="ECO:0007829" key="4">
    <source>
        <dbReference type="PDB" id="3WHJ"/>
    </source>
</evidence>
<evidence type="ECO:0007829" key="5">
    <source>
        <dbReference type="PDB" id="4O06"/>
    </source>
</evidence>
<gene>
    <name type="primary">NAS2</name>
    <name type="ordered locus">YIL007C</name>
</gene>
<sequence>MEEEELSKLLANVKIDPSLTSRISQIDSFKLSELMVLKTDIETQLEAYFSVLEQQGIGMDSALVTPDGYPRSDVDVLQVTMIRKNVNMLKNDLNHLLQRSHVLLNQHFDNMNVKSNQDARRNNDDQAIQYTIPFAFISEVVPGSPSDKADIKVDDKLISIGNVHAANHSKLQNIQMVVMKNEDRPLPVLLLREGQILKTSLTPSRNWNGRGLLGCRIQEL</sequence>
<name>PSMD9_YEAST</name>
<organism>
    <name type="scientific">Saccharomyces cerevisiae (strain ATCC 204508 / S288c)</name>
    <name type="common">Baker's yeast</name>
    <dbReference type="NCBI Taxonomy" id="559292"/>
    <lineage>
        <taxon>Eukaryota</taxon>
        <taxon>Fungi</taxon>
        <taxon>Dikarya</taxon>
        <taxon>Ascomycota</taxon>
        <taxon>Saccharomycotina</taxon>
        <taxon>Saccharomycetes</taxon>
        <taxon>Saccharomycetales</taxon>
        <taxon>Saccharomycetaceae</taxon>
        <taxon>Saccharomyces</taxon>
    </lineage>
</organism>
<keyword id="KW-0002">3D-structure</keyword>
<keyword id="KW-0143">Chaperone</keyword>
<keyword id="KW-1185">Reference proteome</keyword>
<dbReference type="EMBL" id="Z38113">
    <property type="protein sequence ID" value="CAA86244.1"/>
    <property type="molecule type" value="Genomic_DNA"/>
</dbReference>
<dbReference type="EMBL" id="AY558294">
    <property type="protein sequence ID" value="AAS56620.1"/>
    <property type="molecule type" value="Genomic_DNA"/>
</dbReference>
<dbReference type="EMBL" id="BK006942">
    <property type="protein sequence ID" value="DAA08539.1"/>
    <property type="molecule type" value="Genomic_DNA"/>
</dbReference>
<dbReference type="PIR" id="S48450">
    <property type="entry name" value="S48450"/>
</dbReference>
<dbReference type="RefSeq" id="NP_012259.3">
    <property type="nucleotide sequence ID" value="NM_001179357.3"/>
</dbReference>
<dbReference type="PDB" id="3WHJ">
    <property type="method" value="X-ray"/>
    <property type="resolution" value="1.65 A"/>
    <property type="chains" value="A=1-120"/>
</dbReference>
<dbReference type="PDB" id="3WHL">
    <property type="method" value="X-ray"/>
    <property type="resolution" value="4.00 A"/>
    <property type="chains" value="B/D/F/H=1-120"/>
</dbReference>
<dbReference type="PDB" id="4O06">
    <property type="method" value="X-ray"/>
    <property type="resolution" value="1.15 A"/>
    <property type="chains" value="A=126-220"/>
</dbReference>
<dbReference type="PDBsum" id="3WHJ"/>
<dbReference type="PDBsum" id="3WHL"/>
<dbReference type="PDBsum" id="4O06"/>
<dbReference type="SMR" id="P40555"/>
<dbReference type="BioGRID" id="34985">
    <property type="interactions" value="139"/>
</dbReference>
<dbReference type="DIP" id="DIP-1893N"/>
<dbReference type="FunCoup" id="P40555">
    <property type="interactions" value="1249"/>
</dbReference>
<dbReference type="IntAct" id="P40555">
    <property type="interactions" value="19"/>
</dbReference>
<dbReference type="MINT" id="P40555"/>
<dbReference type="STRING" id="4932.YIL007C"/>
<dbReference type="PaxDb" id="4932-YIL007C"/>
<dbReference type="PeptideAtlas" id="P40555"/>
<dbReference type="EnsemblFungi" id="YIL007C_mRNA">
    <property type="protein sequence ID" value="YIL007C"/>
    <property type="gene ID" value="YIL007C"/>
</dbReference>
<dbReference type="GeneID" id="854810"/>
<dbReference type="KEGG" id="sce:YIL007C"/>
<dbReference type="AGR" id="SGD:S000001269"/>
<dbReference type="SGD" id="S000001269">
    <property type="gene designation" value="NAS2"/>
</dbReference>
<dbReference type="VEuPathDB" id="FungiDB:YIL007C"/>
<dbReference type="eggNOG" id="KOG3129">
    <property type="taxonomic scope" value="Eukaryota"/>
</dbReference>
<dbReference type="GeneTree" id="ENSGT00390000004147"/>
<dbReference type="HOGENOM" id="CLU_073146_0_0_1"/>
<dbReference type="InParanoid" id="P40555"/>
<dbReference type="OMA" id="DWGGRGM"/>
<dbReference type="OrthoDB" id="72325at2759"/>
<dbReference type="BioCyc" id="YEAST:G3O-31286-MONOMER"/>
<dbReference type="Reactome" id="R-SCE-9907900">
    <property type="pathway name" value="Proteasome assembly"/>
</dbReference>
<dbReference type="BioGRID-ORCS" id="854810">
    <property type="hits" value="1 hit in 10 CRISPR screens"/>
</dbReference>
<dbReference type="EvolutionaryTrace" id="P40555"/>
<dbReference type="PRO" id="PR:P40555"/>
<dbReference type="Proteomes" id="UP000002311">
    <property type="component" value="Chromosome IX"/>
</dbReference>
<dbReference type="RNAct" id="P40555">
    <property type="molecule type" value="protein"/>
</dbReference>
<dbReference type="GO" id="GO:0005737">
    <property type="term" value="C:cytoplasm"/>
    <property type="evidence" value="ECO:0000314"/>
    <property type="project" value="SGD"/>
</dbReference>
<dbReference type="GO" id="GO:0005829">
    <property type="term" value="C:cytosol"/>
    <property type="evidence" value="ECO:0000314"/>
    <property type="project" value="SGD"/>
</dbReference>
<dbReference type="GO" id="GO:0005634">
    <property type="term" value="C:nucleus"/>
    <property type="evidence" value="ECO:0000314"/>
    <property type="project" value="SGD"/>
</dbReference>
<dbReference type="GO" id="GO:0070682">
    <property type="term" value="P:proteasome regulatory particle assembly"/>
    <property type="evidence" value="ECO:0000314"/>
    <property type="project" value="SGD"/>
</dbReference>
<dbReference type="FunFam" id="2.30.42.10:FF:000107">
    <property type="entry name" value="26S proteasome non-ATPase regulatory subunit 9"/>
    <property type="match status" value="1"/>
</dbReference>
<dbReference type="Gene3D" id="2.30.42.10">
    <property type="match status" value="1"/>
</dbReference>
<dbReference type="Gene3D" id="6.10.140.1710">
    <property type="match status" value="1"/>
</dbReference>
<dbReference type="InterPro" id="IPR040815">
    <property type="entry name" value="Nas2_N"/>
</dbReference>
<dbReference type="InterPro" id="IPR001478">
    <property type="entry name" value="PDZ"/>
</dbReference>
<dbReference type="InterPro" id="IPR036034">
    <property type="entry name" value="PDZ_sf"/>
</dbReference>
<dbReference type="InterPro" id="IPR035269">
    <property type="entry name" value="PSMD9"/>
</dbReference>
<dbReference type="PANTHER" id="PTHR12651">
    <property type="entry name" value="26S PROTEASOME NON-ATPASE REGULATORY SUBUNIT 9"/>
    <property type="match status" value="1"/>
</dbReference>
<dbReference type="PANTHER" id="PTHR12651:SF1">
    <property type="entry name" value="26S PROTEASOME NON-ATPASE REGULATORY SUBUNIT 9"/>
    <property type="match status" value="1"/>
</dbReference>
<dbReference type="Pfam" id="PF18265">
    <property type="entry name" value="Nas2_N"/>
    <property type="match status" value="1"/>
</dbReference>
<dbReference type="Pfam" id="PF00595">
    <property type="entry name" value="PDZ"/>
    <property type="match status" value="1"/>
</dbReference>
<dbReference type="SMART" id="SM00228">
    <property type="entry name" value="PDZ"/>
    <property type="match status" value="1"/>
</dbReference>
<dbReference type="SUPFAM" id="SSF50156">
    <property type="entry name" value="PDZ domain-like"/>
    <property type="match status" value="1"/>
</dbReference>
<proteinExistence type="evidence at protein level"/>
<comment type="function">
    <text evidence="2">Acts as a chaperone during the assembly of the 26S proteasome, specifically of the base subcomplex of the 19S regulatory complex (RC). During the base subcomplex assembly is part of a NAS2:RPT4:RPT5 module; NAS2 is released during the further base assembly process.</text>
</comment>
<comment type="subunit">
    <text>Part of a transient complex containing NAS2, RPT4 and RPT5 formed during the assembly of the 26S proteasome.</text>
</comment>
<comment type="interaction">
    <interactant intactId="EBI-14024">
        <id>P40555</id>
    </interactant>
    <interactant intactId="EBI-24859">
        <id>P38872</id>
        <label>PFS1</label>
    </interactant>
    <organismsDiffer>false</organismsDiffer>
    <experiments>3</experiments>
</comment>
<comment type="interaction">
    <interactant intactId="EBI-14024">
        <id>P40555</id>
    </interactant>
    <interactant intactId="EBI-13920">
        <id>P33297</id>
        <label>RPT5</label>
    </interactant>
    <organismsDiffer>false</organismsDiffer>
    <experiments>8</experiments>
</comment>
<comment type="miscellaneous">
    <text evidence="1">Present with 846 molecules/cell in log phase SD medium.</text>
</comment>
<comment type="similarity">
    <text evidence="3">Belongs to the proteasome subunit p27 family.</text>
</comment>
<reference key="1">
    <citation type="journal article" date="1997" name="Nature">
        <title>The nucleotide sequence of Saccharomyces cerevisiae chromosome IX.</title>
        <authorList>
            <person name="Churcher C.M."/>
            <person name="Bowman S."/>
            <person name="Badcock K."/>
            <person name="Bankier A.T."/>
            <person name="Brown D."/>
            <person name="Chillingworth T."/>
            <person name="Connor R."/>
            <person name="Devlin K."/>
            <person name="Gentles S."/>
            <person name="Hamlin N."/>
            <person name="Harris D.E."/>
            <person name="Horsnell T."/>
            <person name="Hunt S."/>
            <person name="Jagels K."/>
            <person name="Jones M."/>
            <person name="Lye G."/>
            <person name="Moule S."/>
            <person name="Odell C."/>
            <person name="Pearson D."/>
            <person name="Rajandream M.A."/>
            <person name="Rice P."/>
            <person name="Rowley N."/>
            <person name="Skelton J."/>
            <person name="Smith V."/>
            <person name="Walsh S.V."/>
            <person name="Whitehead S."/>
            <person name="Barrell B.G."/>
        </authorList>
    </citation>
    <scope>NUCLEOTIDE SEQUENCE [LARGE SCALE GENOMIC DNA]</scope>
    <source>
        <strain>ATCC 204508 / S288c</strain>
    </source>
</reference>
<reference key="2">
    <citation type="journal article" date="2014" name="G3 (Bethesda)">
        <title>The reference genome sequence of Saccharomyces cerevisiae: Then and now.</title>
        <authorList>
            <person name="Engel S.R."/>
            <person name="Dietrich F.S."/>
            <person name="Fisk D.G."/>
            <person name="Binkley G."/>
            <person name="Balakrishnan R."/>
            <person name="Costanzo M.C."/>
            <person name="Dwight S.S."/>
            <person name="Hitz B.C."/>
            <person name="Karra K."/>
            <person name="Nash R.S."/>
            <person name="Weng S."/>
            <person name="Wong E.D."/>
            <person name="Lloyd P."/>
            <person name="Skrzypek M.S."/>
            <person name="Miyasato S.R."/>
            <person name="Simison M."/>
            <person name="Cherry J.M."/>
        </authorList>
    </citation>
    <scope>GENOME REANNOTATION</scope>
    <source>
        <strain>ATCC 204508 / S288c</strain>
    </source>
</reference>
<reference key="3">
    <citation type="journal article" date="2007" name="Genome Res.">
        <title>Approaching a complete repository of sequence-verified protein-encoding clones for Saccharomyces cerevisiae.</title>
        <authorList>
            <person name="Hu Y."/>
            <person name="Rolfs A."/>
            <person name="Bhullar B."/>
            <person name="Murthy T.V.S."/>
            <person name="Zhu C."/>
            <person name="Berger M.F."/>
            <person name="Camargo A.A."/>
            <person name="Kelley F."/>
            <person name="McCarron S."/>
            <person name="Jepson D."/>
            <person name="Richardson A."/>
            <person name="Raphael J."/>
            <person name="Moreira D."/>
            <person name="Taycher E."/>
            <person name="Zuo D."/>
            <person name="Mohr S."/>
            <person name="Kane M.F."/>
            <person name="Williamson J."/>
            <person name="Simpson A.J.G."/>
            <person name="Bulyk M.L."/>
            <person name="Harlow E."/>
            <person name="Marsischky G."/>
            <person name="Kolodner R.D."/>
            <person name="LaBaer J."/>
        </authorList>
    </citation>
    <scope>NUCLEOTIDE SEQUENCE [GENOMIC DNA]</scope>
    <source>
        <strain>ATCC 204508 / S288c</strain>
    </source>
</reference>
<reference key="4">
    <citation type="journal article" date="1998" name="Genomics">
        <title>cDNA cloning and characterization of a human proteasomal modulator subunit, p27 (PSMD9).</title>
        <authorList>
            <person name="Watanabe T.K."/>
            <person name="Saito A."/>
            <person name="Suzuki M."/>
            <person name="Fujiwara T."/>
            <person name="Takahashi E."/>
            <person name="Slaughter C.A."/>
            <person name="DeMartino G.N."/>
            <person name="Hendil K.B."/>
            <person name="Chung C.H."/>
            <person name="Tanahashi N."/>
            <person name="Tanaka K."/>
        </authorList>
    </citation>
    <scope>CHARACTERIZATION</scope>
</reference>
<reference key="5">
    <citation type="journal article" date="2003" name="Nature">
        <title>Global analysis of protein expression in yeast.</title>
        <authorList>
            <person name="Ghaemmaghami S."/>
            <person name="Huh W.-K."/>
            <person name="Bower K."/>
            <person name="Howson R.W."/>
            <person name="Belle A."/>
            <person name="Dephoure N."/>
            <person name="O'Shea E.K."/>
            <person name="Weissman J.S."/>
        </authorList>
    </citation>
    <scope>LEVEL OF PROTEIN EXPRESSION [LARGE SCALE ANALYSIS]</scope>
</reference>
<reference key="6">
    <citation type="journal article" date="2009" name="Cell">
        <title>Multiple assembly chaperones govern biogenesis of the proteasome regulatory particle base.</title>
        <authorList>
            <person name="Funakoshi M."/>
            <person name="Tomko R.J. Jr."/>
            <person name="Kobayashi H."/>
            <person name="Hochstrasser M."/>
        </authorList>
    </citation>
    <scope>FUNCTION AS PROTEASOME CHAPERONE</scope>
</reference>
<reference key="7">
    <citation type="journal article" date="2012" name="Proc. Natl. Acad. Sci. U.S.A.">
        <title>N-terminal acetylome analyses and functional insights of the N-terminal acetyltransferase NatB.</title>
        <authorList>
            <person name="Van Damme P."/>
            <person name="Lasa M."/>
            <person name="Polevoda B."/>
            <person name="Gazquez C."/>
            <person name="Elosegui-Artola A."/>
            <person name="Kim D.S."/>
            <person name="De Juan-Pardo E."/>
            <person name="Demeyer K."/>
            <person name="Hole K."/>
            <person name="Larrea E."/>
            <person name="Timmerman E."/>
            <person name="Prieto J."/>
            <person name="Arnesen T."/>
            <person name="Sherman F."/>
            <person name="Gevaert K."/>
            <person name="Aldabe R."/>
        </authorList>
    </citation>
    <scope>IDENTIFICATION BY MASS SPECTROMETRY [LARGE SCALE ANALYSIS]</scope>
</reference>